<reference evidence="4" key="1">
    <citation type="journal article" date="2018" name="J. Proteome Res.">
        <title>Mating-induced differential peptidomics of neuropeptides and protein hormones in Agrotis ipsilon moths.</title>
        <authorList>
            <person name="Diesner M."/>
            <person name="Gallot A."/>
            <person name="Binz H."/>
            <person name="Gaertner C."/>
            <person name="Vitecek S."/>
            <person name="Kahnt J."/>
            <person name="Schachtner J."/>
            <person name="Jacquin-Joly E."/>
            <person name="Gadenne C."/>
        </authorList>
    </citation>
    <scope>NUCLEOTIDE SEQUENCE [MRNA]</scope>
    <scope>PROTEIN SEQUENCE OF 190-198; 202-215; 218-228 AND 232-251</scope>
    <scope>TISSUE SPECIFICITY</scope>
    <scope>MASS SPECTROMETRY</scope>
    <scope>IDENTIFICATION BY MASS SPECTROMETRY</scope>
    <scope>AMIDATION AT TRP-89; TRP-152; TRP-198 AND TRP-228</scope>
</reference>
<feature type="propeptide" id="PRO_0000444265" evidence="4">
    <location>
        <begin position="1"/>
        <end position="77"/>
    </location>
</feature>
<feature type="peptide" id="PRO_0000444266" description="Prothoracicostatic peptide 5" evidence="2">
    <location>
        <begin position="80"/>
        <end position="89"/>
    </location>
</feature>
<feature type="propeptide" id="PRO_0000444267" evidence="4">
    <location>
        <begin position="93"/>
        <end position="138"/>
    </location>
</feature>
<feature type="peptide" id="PRO_0000444268" description="Prothoracicostatic peptide 6" evidence="2">
    <location>
        <begin position="141"/>
        <end position="152"/>
    </location>
</feature>
<feature type="propeptide" id="PRO_0000444269" evidence="4">
    <location>
        <begin position="156"/>
        <end position="187"/>
    </location>
</feature>
<feature type="peptide" id="PRO_0000444270" description="Prothoracicostatic peptide 7" evidence="2">
    <location>
        <begin position="190"/>
        <end position="198"/>
    </location>
</feature>
<feature type="peptide" id="PRO_0000444271" description="Prothoracicostatic peptide precursor-related peptide 2" evidence="2">
    <location>
        <begin position="202"/>
        <end position="215"/>
    </location>
</feature>
<feature type="peptide" id="PRO_0000444272" description="Prothoracicostatic peptide 8" evidence="2">
    <location>
        <begin position="218"/>
        <end position="228"/>
    </location>
</feature>
<feature type="peptide" id="PRO_0000444273" description="Prothoracicostatic peptide precursor-related peptide 3" evidence="2">
    <location>
        <begin position="232"/>
        <end position="251"/>
    </location>
</feature>
<feature type="region of interest" description="Disordered" evidence="1">
    <location>
        <begin position="1"/>
        <end position="22"/>
    </location>
</feature>
<feature type="region of interest" description="Disordered" evidence="1">
    <location>
        <begin position="227"/>
        <end position="251"/>
    </location>
</feature>
<feature type="modified residue" description="Tryptophan amide" evidence="2">
    <location>
        <position position="89"/>
    </location>
</feature>
<feature type="modified residue" description="Tryptophan amide" evidence="2">
    <location>
        <position position="152"/>
    </location>
</feature>
<feature type="modified residue" description="Tryptophan amide" evidence="2">
    <location>
        <position position="198"/>
    </location>
</feature>
<feature type="modified residue" description="Tryptophan amide" evidence="2">
    <location>
        <position position="228"/>
    </location>
</feature>
<dbReference type="SMR" id="C0HKW7"/>
<dbReference type="GO" id="GO:0005576">
    <property type="term" value="C:extracellular region"/>
    <property type="evidence" value="ECO:0007669"/>
    <property type="project" value="UniProtKB-SubCell"/>
</dbReference>
<dbReference type="GO" id="GO:0007218">
    <property type="term" value="P:neuropeptide signaling pathway"/>
    <property type="evidence" value="ECO:0007669"/>
    <property type="project" value="UniProtKB-KW"/>
</dbReference>
<proteinExistence type="evidence at protein level"/>
<keyword id="KW-0027">Amidation</keyword>
<keyword id="KW-0165">Cleavage on pair of basic residues</keyword>
<keyword id="KW-0903">Direct protein sequencing</keyword>
<keyword id="KW-0527">Neuropeptide</keyword>
<keyword id="KW-0964">Secreted</keyword>
<name>PTSP_AGRIP</name>
<organism>
    <name type="scientific">Agrotis ipsilon</name>
    <name type="common">Black cutworm moth</name>
    <dbReference type="NCBI Taxonomy" id="56364"/>
    <lineage>
        <taxon>Eukaryota</taxon>
        <taxon>Metazoa</taxon>
        <taxon>Ecdysozoa</taxon>
        <taxon>Arthropoda</taxon>
        <taxon>Hexapoda</taxon>
        <taxon>Insecta</taxon>
        <taxon>Pterygota</taxon>
        <taxon>Neoptera</taxon>
        <taxon>Endopterygota</taxon>
        <taxon>Lepidoptera</taxon>
        <taxon>Glossata</taxon>
        <taxon>Ditrysia</taxon>
        <taxon>Noctuoidea</taxon>
        <taxon>Noctuidae</taxon>
        <taxon>Noctuinae</taxon>
        <taxon>Noctuini</taxon>
        <taxon>Agrotis</taxon>
    </lineage>
</organism>
<accession>C0HKW7</accession>
<accession>C0HKW8</accession>
<accession>C0HKW9</accession>
<accession>C0HKX0</accession>
<accession>C0HKX1</accession>
<accession>C0HKX2</accession>
<comment type="subcellular location">
    <subcellularLocation>
        <location evidence="4">Secreted</location>
    </subcellularLocation>
</comment>
<comment type="tissue specificity">
    <text evidence="2">Prothoracicostatic peptide 5: Expressed in antennal lobe (AL), corpora cardiaca (CC), corpora allata (CA) and gnathal ganglion (GNG) (at protein level). Expression in AL detected in all animals, in CC, CA and GNG in most (at protein level). Prothoracicostatic peptide 6: Expressed in antennal lobe (AL), corpora cardiaca (CC), corpora allata (CA) and gnathal ganglion (GNG) (at protein level). Expression in AL detected in all animals, expression in GNG in most animals, in CA and CC detected in some animals (at protein level). Prothoracicostatic peptide 7: Expressed in antennal lobe (AL), corpora cardiaca (CC), corpora allata (CA) and gnathal ganglion (GNG) (at protein level). Expression in AL, CA and CC detected in most animals, expression in GNG in some animals (at protein level). Prothoracicostatic peptide precursor-related peptide 2: Expressed in antennal lobe (AL), corpora cardiaca (CC) and corpora allata (CA) with expression detected in few animals (at protein level). Not expressed in gnathal ganglion (GNG) (at protein level). Prothoracicostatic peptide 8: Expressed in antennal lobe (AL), corpora cardiaca (CC), corpora allata (CA) and gnathal ganglion (GNG) (at protein level). Expression in AL detected in all animals, expression in GNG in most animals, in CA and CC detected in some animals (at protein level). Prothoracicostatic peptide precursor-related peptide 3: Expressed in antennal lobe (AL) in few animals (at protein level). Not expressed in corpora cardiaca (CC), corpora allata (CA) and gnathal ganglion (GNG) (at protein level).</text>
</comment>
<comment type="mass spectrometry" mass="1262.58" method="MALDI" evidence="2">
    <molecule>Prothoracicostatic peptide 5</molecule>
    <text>Prothoracicostatic peptide 5.</text>
</comment>
<comment type="mass spectrometry" mass="1414.66" method="MALDI" evidence="2">
    <molecule>Prothoracicostatic peptide 6</molecule>
    <text>Prothoracicostatic peptide 6.</text>
</comment>
<comment type="mass spectrometry" mass="997.47" method="MALDI" evidence="2">
    <molecule>Prothoracicostatic peptide 7</molecule>
    <text>Prothoracicostatic peptide 7.</text>
</comment>
<comment type="mass spectrometry" mass="1690.78" method="MALDI" evidence="2">
    <molecule>Prothoracicostatic peptide precursor-related peptide 2</molecule>
    <text>Prothoracicostatic peptide-PP 2.</text>
</comment>
<comment type="mass spectrometry" mass="1359.67" method="MALDI" evidence="2">
    <molecule>Prothoracicostatic peptide 8</molecule>
    <text>Prothoracicostatic peptide 8.</text>
</comment>
<comment type="mass spectrometry" mass="2072.8" method="MALDI" evidence="2">
    <molecule>Prothoracicostatic peptide precursor-related peptide 3</molecule>
    <text>Prothoracicostatic peptide-PP 3.</text>
</comment>
<comment type="caution">
    <text evidence="4">Further mature peptides might exist.</text>
</comment>
<evidence type="ECO:0000256" key="1">
    <source>
        <dbReference type="SAM" id="MobiDB-lite"/>
    </source>
</evidence>
<evidence type="ECO:0000269" key="2">
    <source>
    </source>
</evidence>
<evidence type="ECO:0000303" key="3">
    <source>
    </source>
</evidence>
<evidence type="ECO:0000305" key="4"/>
<sequence length="251" mass="28633">MRKSARGQVCTEAGAGASGDWQDMSSAWGKRAWQDLNSAWGKRGWNDMSSAWGKRAWQDLNSAWGKRGWQDLNSAWGKRAWRDMSQSPWGKRGWNDMSSAWGKRGWNDMSSAWGKRGWNDMSSAWGKRGWNDMSSAWGKRGPEKWANFHGSWGKRAAEPDYEEIDAAIEQLIPIQQLSDNERMEVPEKKAWSALHGAWGKRPVKQAQYNSGSYYWKREPAWTNLRGMWGKRSAPDADAVDDDHESSARDEA</sequence>
<protein>
    <recommendedName>
        <fullName evidence="3">Prothoracicostatic peptides</fullName>
    </recommendedName>
    <component>
        <recommendedName>
            <fullName evidence="3">Prothoracicostatic peptide 5</fullName>
            <shortName evidence="3">PTSP-5</shortName>
        </recommendedName>
    </component>
    <component>
        <recommendedName>
            <fullName evidence="3">Prothoracicostatic peptide 6</fullName>
            <shortName evidence="3">PTSP-6</shortName>
        </recommendedName>
    </component>
    <component>
        <recommendedName>
            <fullName evidence="3">Prothoracicostatic peptide 7</fullName>
            <shortName evidence="3">PTSP-7</shortName>
        </recommendedName>
    </component>
    <component>
        <recommendedName>
            <fullName evidence="3">Prothoracicostatic peptide precursor-related peptide 2</fullName>
            <shortName evidence="3">PTSP-PP-2</shortName>
        </recommendedName>
    </component>
    <component>
        <recommendedName>
            <fullName evidence="3">Prothoracicostatic peptide 8</fullName>
            <shortName evidence="3">PTSP-8</shortName>
        </recommendedName>
    </component>
    <component>
        <recommendedName>
            <fullName evidence="3">Prothoracicostatic peptide precursor-related peptide 3</fullName>
            <shortName evidence="3">PTSP-PP-3</shortName>
        </recommendedName>
    </component>
</protein>